<name>YCF3_PSINU</name>
<gene>
    <name evidence="1" type="primary">ycf3</name>
</gene>
<keyword id="KW-0150">Chloroplast</keyword>
<keyword id="KW-0472">Membrane</keyword>
<keyword id="KW-0602">Photosynthesis</keyword>
<keyword id="KW-0934">Plastid</keyword>
<keyword id="KW-0677">Repeat</keyword>
<keyword id="KW-0793">Thylakoid</keyword>
<keyword id="KW-0802">TPR repeat</keyword>
<sequence>MPRSQRNDNFIDKTFTIAADILLRVIPTTRREKEAFTYYRDGMSAQSEGEYAEALQNYYKAMRLEIDPYDRSYILYNIGLIHTSNGEHAKALEYYFQALERNPSLPQAFNNMAVICHYRGEQAIQQGDPGTSEIWFDKAAEYWKQAIALAPNNYIEAQNWLRITGRSEDWE</sequence>
<accession>Q8WI17</accession>
<geneLocation type="chloroplast"/>
<proteinExistence type="inferred from homology"/>
<evidence type="ECO:0000255" key="1">
    <source>
        <dbReference type="HAMAP-Rule" id="MF_00439"/>
    </source>
</evidence>
<feature type="chain" id="PRO_0000217821" description="Photosystem I assembly protein Ycf3">
    <location>
        <begin position="1"/>
        <end position="171"/>
    </location>
</feature>
<feature type="repeat" description="TPR 1">
    <location>
        <begin position="35"/>
        <end position="68"/>
    </location>
</feature>
<feature type="repeat" description="TPR 2">
    <location>
        <begin position="72"/>
        <end position="105"/>
    </location>
</feature>
<feature type="repeat" description="TPR 3">
    <location>
        <begin position="120"/>
        <end position="153"/>
    </location>
</feature>
<dbReference type="EMBL" id="AP004638">
    <property type="protein sequence ID" value="BAB84217.1"/>
    <property type="molecule type" value="Genomic_DNA"/>
</dbReference>
<dbReference type="RefSeq" id="NP_569630.1">
    <property type="nucleotide sequence ID" value="NC_003386.1"/>
</dbReference>
<dbReference type="SMR" id="Q8WI17"/>
<dbReference type="GeneID" id="2545234"/>
<dbReference type="GO" id="GO:0009535">
    <property type="term" value="C:chloroplast thylakoid membrane"/>
    <property type="evidence" value="ECO:0007669"/>
    <property type="project" value="UniProtKB-SubCell"/>
</dbReference>
<dbReference type="GO" id="GO:0015979">
    <property type="term" value="P:photosynthesis"/>
    <property type="evidence" value="ECO:0007669"/>
    <property type="project" value="UniProtKB-UniRule"/>
</dbReference>
<dbReference type="FunFam" id="1.25.40.10:FF:000004">
    <property type="entry name" value="Photosystem I assembly protein Ycf3"/>
    <property type="match status" value="1"/>
</dbReference>
<dbReference type="Gene3D" id="1.25.40.10">
    <property type="entry name" value="Tetratricopeptide repeat domain"/>
    <property type="match status" value="1"/>
</dbReference>
<dbReference type="HAMAP" id="MF_00439">
    <property type="entry name" value="Ycf3"/>
    <property type="match status" value="1"/>
</dbReference>
<dbReference type="InterPro" id="IPR022818">
    <property type="entry name" value="PSI_Ycf3_assembly"/>
</dbReference>
<dbReference type="InterPro" id="IPR011990">
    <property type="entry name" value="TPR-like_helical_dom_sf"/>
</dbReference>
<dbReference type="InterPro" id="IPR019734">
    <property type="entry name" value="TPR_rpt"/>
</dbReference>
<dbReference type="InterPro" id="IPR051685">
    <property type="entry name" value="Ycf3/AcsC/BcsC/TPR_MFPF"/>
</dbReference>
<dbReference type="NCBIfam" id="NF002725">
    <property type="entry name" value="PRK02603.1"/>
    <property type="match status" value="1"/>
</dbReference>
<dbReference type="PANTHER" id="PTHR44943">
    <property type="entry name" value="CELLULOSE SYNTHASE OPERON PROTEIN C"/>
    <property type="match status" value="1"/>
</dbReference>
<dbReference type="PANTHER" id="PTHR44943:SF8">
    <property type="entry name" value="TPR REPEAT-CONTAINING PROTEIN MJ0263"/>
    <property type="match status" value="1"/>
</dbReference>
<dbReference type="Pfam" id="PF00515">
    <property type="entry name" value="TPR_1"/>
    <property type="match status" value="1"/>
</dbReference>
<dbReference type="SMART" id="SM00028">
    <property type="entry name" value="TPR"/>
    <property type="match status" value="3"/>
</dbReference>
<dbReference type="SUPFAM" id="SSF48452">
    <property type="entry name" value="TPR-like"/>
    <property type="match status" value="1"/>
</dbReference>
<dbReference type="PROSITE" id="PS50005">
    <property type="entry name" value="TPR"/>
    <property type="match status" value="3"/>
</dbReference>
<dbReference type="PROSITE" id="PS50293">
    <property type="entry name" value="TPR_REGION"/>
    <property type="match status" value="2"/>
</dbReference>
<reference key="1">
    <citation type="journal article" date="2004" name="Mol. Biol. Evol.">
        <title>Chloroplast phylogeny indicates that bryophytes are monophyletic.</title>
        <authorList>
            <person name="Nishiyama T."/>
            <person name="Wolf P.G."/>
            <person name="Kugita M."/>
            <person name="Sinclair R.B."/>
            <person name="Sugita M."/>
            <person name="Sugiura C."/>
            <person name="Wakasugi T."/>
            <person name="Yamada K."/>
            <person name="Yoshinaga K."/>
            <person name="Yamaguchi K."/>
            <person name="Ueda K."/>
            <person name="Hasebe M."/>
        </authorList>
    </citation>
    <scope>NUCLEOTIDE SEQUENCE [LARGE SCALE GENOMIC DNA]</scope>
    <source>
        <strain>Kingyoku</strain>
    </source>
</reference>
<organism>
    <name type="scientific">Psilotum nudum</name>
    <name type="common">Whisk fern</name>
    <name type="synonym">Lycopodium nudum</name>
    <dbReference type="NCBI Taxonomy" id="3240"/>
    <lineage>
        <taxon>Eukaryota</taxon>
        <taxon>Viridiplantae</taxon>
        <taxon>Streptophyta</taxon>
        <taxon>Embryophyta</taxon>
        <taxon>Tracheophyta</taxon>
        <taxon>Polypodiopsida</taxon>
        <taxon>Ophioglossidae</taxon>
        <taxon>Psilotales</taxon>
        <taxon>Psilotaceae</taxon>
        <taxon>Psilotum</taxon>
    </lineage>
</organism>
<comment type="function">
    <text evidence="1">Essential for the assembly of the photosystem I (PSI) complex. May act as a chaperone-like factor to guide the assembly of the PSI subunits.</text>
</comment>
<comment type="subcellular location">
    <subcellularLocation>
        <location evidence="1">Plastid</location>
        <location evidence="1">Chloroplast thylakoid membrane</location>
        <topology evidence="1">Peripheral membrane protein</topology>
    </subcellularLocation>
</comment>
<comment type="similarity">
    <text evidence="1">Belongs to the Ycf3 family.</text>
</comment>
<protein>
    <recommendedName>
        <fullName evidence="1">Photosystem I assembly protein Ycf3</fullName>
    </recommendedName>
</protein>